<reference key="1">
    <citation type="submission" date="2001-07" db="EMBL/GenBank/DDBJ databases">
        <title>Genome-wide discovery and analysis of human seven transmembrane helix receptor genes.</title>
        <authorList>
            <person name="Suwa M."/>
            <person name="Sato T."/>
            <person name="Okouchi I."/>
            <person name="Arita M."/>
            <person name="Futami K."/>
            <person name="Matsumoto S."/>
            <person name="Tsutsumi S."/>
            <person name="Aburatani H."/>
            <person name="Asai K."/>
            <person name="Akiyama Y."/>
        </authorList>
    </citation>
    <scope>NUCLEOTIDE SEQUENCE [GENOMIC DNA]</scope>
</reference>
<reference key="2">
    <citation type="journal article" date="2002" name="Genomics">
        <title>DEFOG: a practical scheme for deciphering families of genes.</title>
        <authorList>
            <person name="Fuchs T."/>
            <person name="Malecova B."/>
            <person name="Linhart C."/>
            <person name="Sharan R."/>
            <person name="Khen M."/>
            <person name="Herwig R."/>
            <person name="Shmulevich D."/>
            <person name="Elkon R."/>
            <person name="Steinfath M."/>
            <person name="O'Brien J.K."/>
            <person name="Radelof U."/>
            <person name="Lehrach H."/>
            <person name="Lancet D."/>
            <person name="Shamir R."/>
        </authorList>
    </citation>
    <scope>NUCLEOTIDE SEQUENCE [GENOMIC DNA] OF 68-283</scope>
</reference>
<reference key="3">
    <citation type="journal article" date="2004" name="Proc. Natl. Acad. Sci. U.S.A.">
        <title>The human olfactory receptor gene family.</title>
        <authorList>
            <person name="Malnic B."/>
            <person name="Godfrey P.A."/>
            <person name="Buck L.B."/>
        </authorList>
    </citation>
    <scope>IDENTIFICATION</scope>
</reference>
<reference key="4">
    <citation type="journal article" date="2004" name="Proc. Natl. Acad. Sci. U.S.A.">
        <authorList>
            <person name="Malnic B."/>
            <person name="Godfrey P.A."/>
            <person name="Buck L.B."/>
        </authorList>
    </citation>
    <scope>ERRATUM OF PUBMED:14983052</scope>
</reference>
<feature type="chain" id="PRO_0000150652" description="Olfactory receptor 7G3">
    <location>
        <begin position="1"/>
        <end position="312"/>
    </location>
</feature>
<feature type="topological domain" description="Extracellular" evidence="1">
    <location>
        <begin position="1"/>
        <end position="25"/>
    </location>
</feature>
<feature type="transmembrane region" description="Helical; Name=1" evidence="1">
    <location>
        <begin position="26"/>
        <end position="46"/>
    </location>
</feature>
<feature type="topological domain" description="Cytoplasmic" evidence="1">
    <location>
        <begin position="47"/>
        <end position="54"/>
    </location>
</feature>
<feature type="transmembrane region" description="Helical; Name=2" evidence="1">
    <location>
        <begin position="55"/>
        <end position="75"/>
    </location>
</feature>
<feature type="topological domain" description="Extracellular" evidence="1">
    <location>
        <begin position="76"/>
        <end position="99"/>
    </location>
</feature>
<feature type="transmembrane region" description="Helical; Name=3" evidence="1">
    <location>
        <begin position="100"/>
        <end position="120"/>
    </location>
</feature>
<feature type="topological domain" description="Cytoplasmic" evidence="1">
    <location>
        <begin position="121"/>
        <end position="139"/>
    </location>
</feature>
<feature type="transmembrane region" description="Helical; Name=4" evidence="1">
    <location>
        <begin position="140"/>
        <end position="160"/>
    </location>
</feature>
<feature type="topological domain" description="Extracellular" evidence="1">
    <location>
        <begin position="161"/>
        <end position="197"/>
    </location>
</feature>
<feature type="transmembrane region" description="Helical; Name=5" evidence="1">
    <location>
        <begin position="198"/>
        <end position="217"/>
    </location>
</feature>
<feature type="topological domain" description="Cytoplasmic" evidence="1">
    <location>
        <begin position="218"/>
        <end position="237"/>
    </location>
</feature>
<feature type="transmembrane region" description="Helical; Name=6" evidence="1">
    <location>
        <begin position="238"/>
        <end position="258"/>
    </location>
</feature>
<feature type="topological domain" description="Extracellular" evidence="1">
    <location>
        <begin position="259"/>
        <end position="271"/>
    </location>
</feature>
<feature type="transmembrane region" description="Helical; Name=7" evidence="1">
    <location>
        <begin position="272"/>
        <end position="292"/>
    </location>
</feature>
<feature type="topological domain" description="Cytoplasmic" evidence="1">
    <location>
        <begin position="293"/>
        <end position="312"/>
    </location>
</feature>
<feature type="glycosylation site" description="N-linked (GlcNAc...) asparagine" evidence="1">
    <location>
        <position position="5"/>
    </location>
</feature>
<feature type="glycosylation site" description="N-linked (GlcNAc...) asparagine" evidence="1">
    <location>
        <position position="93"/>
    </location>
</feature>
<feature type="disulfide bond" evidence="2">
    <location>
        <begin position="97"/>
        <end position="189"/>
    </location>
</feature>
<feature type="sequence variant" id="VAR_024114" description="In dbSNP:rs10414255.">
    <original>M</original>
    <variation>V</variation>
    <location>
        <position position="29"/>
    </location>
</feature>
<organism>
    <name type="scientific">Homo sapiens</name>
    <name type="common">Human</name>
    <dbReference type="NCBI Taxonomy" id="9606"/>
    <lineage>
        <taxon>Eukaryota</taxon>
        <taxon>Metazoa</taxon>
        <taxon>Chordata</taxon>
        <taxon>Craniata</taxon>
        <taxon>Vertebrata</taxon>
        <taxon>Euteleostomi</taxon>
        <taxon>Mammalia</taxon>
        <taxon>Eutheria</taxon>
        <taxon>Euarchontoglires</taxon>
        <taxon>Primates</taxon>
        <taxon>Haplorrhini</taxon>
        <taxon>Catarrhini</taxon>
        <taxon>Hominidae</taxon>
        <taxon>Homo</taxon>
    </lineage>
</organism>
<proteinExistence type="inferred from homology"/>
<accession>Q8NG95</accession>
<accession>Q6IFJ6</accession>
<accession>Q96R99</accession>
<sequence length="312" mass="34439">MKAGNFSDTPEFFLLGLSGDPELQPILFMLFLSMYLATMLGNLLIILAVNSDSHLHTPMYFLLSILSLVDICFTSTTMPKMLVNIQAQAQSINYTGCLTQICFVLVFVGLENGILVMMAYDRFVAICHPLRYNVIMNPKLCGLLLLLSFIVSVLDALLHTLMVLQLTFCIDLEIPHFFCELAHILKLACSDVLINNILVYLVTSLLGVVPLSGIIFSYTRIVSSVMKIPSAGGKYKAFSICGSHLIVVSLFYGTGFGVYLSSGATHSSRKGAIASVMYTVVTPMLNPLIYSLRNKDMLKALRKLISRIPSFH</sequence>
<gene>
    <name type="primary">OR7G3</name>
</gene>
<protein>
    <recommendedName>
        <fullName>Olfactory receptor 7G3</fullName>
    </recommendedName>
    <alternativeName>
        <fullName>OST085</fullName>
    </alternativeName>
    <alternativeName>
        <fullName>Olfactory receptor OR19-9</fullName>
    </alternativeName>
</protein>
<evidence type="ECO:0000255" key="1"/>
<evidence type="ECO:0000255" key="2">
    <source>
        <dbReference type="PROSITE-ProRule" id="PRU00521"/>
    </source>
</evidence>
<evidence type="ECO:0000305" key="3"/>
<comment type="function">
    <text evidence="3">Odorant receptor.</text>
</comment>
<comment type="subcellular location">
    <subcellularLocation>
        <location>Cell membrane</location>
        <topology>Multi-pass membrane protein</topology>
    </subcellularLocation>
</comment>
<comment type="similarity">
    <text evidence="2">Belongs to the G-protein coupled receptor 1 family.</text>
</comment>
<comment type="online information" name="Human Olfactory Receptor Data Exploratorium (HORDE)">
    <link uri="http://genome.weizmann.ac.il/horde/card/index/symbol:OR7G3"/>
</comment>
<name>OR7G3_HUMAN</name>
<keyword id="KW-1003">Cell membrane</keyword>
<keyword id="KW-1015">Disulfide bond</keyword>
<keyword id="KW-0297">G-protein coupled receptor</keyword>
<keyword id="KW-0325">Glycoprotein</keyword>
<keyword id="KW-0472">Membrane</keyword>
<keyword id="KW-0552">Olfaction</keyword>
<keyword id="KW-0675">Receptor</keyword>
<keyword id="KW-1185">Reference proteome</keyword>
<keyword id="KW-0716">Sensory transduction</keyword>
<keyword id="KW-0807">Transducer</keyword>
<keyword id="KW-0812">Transmembrane</keyword>
<keyword id="KW-1133">Transmembrane helix</keyword>
<dbReference type="EMBL" id="AB065932">
    <property type="protein sequence ID" value="BAC06147.1"/>
    <property type="molecule type" value="Genomic_DNA"/>
</dbReference>
<dbReference type="EMBL" id="AF399540">
    <property type="protein sequence ID" value="AAK95025.1"/>
    <property type="molecule type" value="Genomic_DNA"/>
</dbReference>
<dbReference type="EMBL" id="BK004266">
    <property type="protein sequence ID" value="DAA04664.1"/>
    <property type="molecule type" value="Genomic_DNA"/>
</dbReference>
<dbReference type="CCDS" id="CCDS32899.1"/>
<dbReference type="RefSeq" id="NP_001001958.1">
    <property type="nucleotide sequence ID" value="NM_001001958.1"/>
</dbReference>
<dbReference type="SMR" id="Q8NG95"/>
<dbReference type="BioGRID" id="133721">
    <property type="interactions" value="1"/>
</dbReference>
<dbReference type="FunCoup" id="Q8NG95">
    <property type="interactions" value="515"/>
</dbReference>
<dbReference type="STRING" id="9606.ENSP00000302867"/>
<dbReference type="GlyCosmos" id="Q8NG95">
    <property type="glycosylation" value="2 sites, No reported glycans"/>
</dbReference>
<dbReference type="GlyGen" id="Q8NG95">
    <property type="glycosylation" value="2 sites"/>
</dbReference>
<dbReference type="iPTMnet" id="Q8NG95"/>
<dbReference type="PhosphoSitePlus" id="Q8NG95"/>
<dbReference type="BioMuta" id="OR7G3"/>
<dbReference type="DMDM" id="38372647"/>
<dbReference type="MassIVE" id="Q8NG95"/>
<dbReference type="PaxDb" id="9606-ENSP00000302867"/>
<dbReference type="Antibodypedia" id="77402">
    <property type="antibodies" value="4 antibodies from 4 providers"/>
</dbReference>
<dbReference type="DNASU" id="390883"/>
<dbReference type="Ensembl" id="ENST00000305444.2">
    <property type="protein sequence ID" value="ENSP00000302867.2"/>
    <property type="gene ID" value="ENSG00000170920.2"/>
</dbReference>
<dbReference type="GeneID" id="390883"/>
<dbReference type="KEGG" id="hsa:390883"/>
<dbReference type="MANE-Select" id="ENST00000305444.2">
    <property type="protein sequence ID" value="ENSP00000302867.2"/>
    <property type="RefSeq nucleotide sequence ID" value="NM_001001958.1"/>
    <property type="RefSeq protein sequence ID" value="NP_001001958.1"/>
</dbReference>
<dbReference type="UCSC" id="uc010xkl.2">
    <property type="organism name" value="human"/>
</dbReference>
<dbReference type="AGR" id="HGNC:8467"/>
<dbReference type="CTD" id="390883"/>
<dbReference type="GeneCards" id="OR7G3"/>
<dbReference type="HGNC" id="HGNC:8467">
    <property type="gene designation" value="OR7G3"/>
</dbReference>
<dbReference type="HPA" id="ENSG00000170920">
    <property type="expression patterns" value="Not detected"/>
</dbReference>
<dbReference type="neXtProt" id="NX_Q8NG95"/>
<dbReference type="OpenTargets" id="ENSG00000170920"/>
<dbReference type="PharmGKB" id="PA32739"/>
<dbReference type="VEuPathDB" id="HostDB:ENSG00000170920"/>
<dbReference type="eggNOG" id="ENOG502T9M5">
    <property type="taxonomic scope" value="Eukaryota"/>
</dbReference>
<dbReference type="GeneTree" id="ENSGT00940000163146"/>
<dbReference type="HOGENOM" id="CLU_012526_1_0_1"/>
<dbReference type="InParanoid" id="Q8NG95"/>
<dbReference type="OMA" id="SINYTGC"/>
<dbReference type="OrthoDB" id="9444602at2759"/>
<dbReference type="PAN-GO" id="Q8NG95">
    <property type="GO annotations" value="3 GO annotations based on evolutionary models"/>
</dbReference>
<dbReference type="PhylomeDB" id="Q8NG95"/>
<dbReference type="TreeFam" id="TF337210"/>
<dbReference type="PathwayCommons" id="Q8NG95"/>
<dbReference type="Reactome" id="R-HSA-9752946">
    <property type="pathway name" value="Expression and translocation of olfactory receptors"/>
</dbReference>
<dbReference type="BioGRID-ORCS" id="390883">
    <property type="hits" value="28 hits in 740 CRISPR screens"/>
</dbReference>
<dbReference type="GeneWiki" id="OR7G3"/>
<dbReference type="GenomeRNAi" id="390883"/>
<dbReference type="Pharos" id="Q8NG95">
    <property type="development level" value="Tdark"/>
</dbReference>
<dbReference type="PRO" id="PR:Q8NG95"/>
<dbReference type="Proteomes" id="UP000005640">
    <property type="component" value="Chromosome 19"/>
</dbReference>
<dbReference type="RNAct" id="Q8NG95">
    <property type="molecule type" value="protein"/>
</dbReference>
<dbReference type="Bgee" id="ENSG00000170920">
    <property type="expression patterns" value="Expressed in fallopian tube"/>
</dbReference>
<dbReference type="ExpressionAtlas" id="Q8NG95">
    <property type="expression patterns" value="baseline and differential"/>
</dbReference>
<dbReference type="GO" id="GO:0005886">
    <property type="term" value="C:plasma membrane"/>
    <property type="evidence" value="ECO:0000318"/>
    <property type="project" value="GO_Central"/>
</dbReference>
<dbReference type="GO" id="GO:0004930">
    <property type="term" value="F:G protein-coupled receptor activity"/>
    <property type="evidence" value="ECO:0007669"/>
    <property type="project" value="UniProtKB-KW"/>
</dbReference>
<dbReference type="GO" id="GO:0004984">
    <property type="term" value="F:olfactory receptor activity"/>
    <property type="evidence" value="ECO:0000318"/>
    <property type="project" value="GO_Central"/>
</dbReference>
<dbReference type="GO" id="GO:0007165">
    <property type="term" value="P:signal transduction"/>
    <property type="evidence" value="ECO:0000318"/>
    <property type="project" value="GO_Central"/>
</dbReference>
<dbReference type="CDD" id="cd15234">
    <property type="entry name" value="7tmA_OR7-like"/>
    <property type="match status" value="1"/>
</dbReference>
<dbReference type="FunFam" id="1.10.1220.70:FF:000001">
    <property type="entry name" value="Olfactory receptor"/>
    <property type="match status" value="1"/>
</dbReference>
<dbReference type="FunFam" id="1.20.1070.10:FF:000009">
    <property type="entry name" value="Olfactory receptor"/>
    <property type="match status" value="1"/>
</dbReference>
<dbReference type="Gene3D" id="1.20.1070.10">
    <property type="entry name" value="Rhodopsin 7-helix transmembrane proteins"/>
    <property type="match status" value="1"/>
</dbReference>
<dbReference type="InterPro" id="IPR000276">
    <property type="entry name" value="GPCR_Rhodpsn"/>
</dbReference>
<dbReference type="InterPro" id="IPR017452">
    <property type="entry name" value="GPCR_Rhodpsn_7TM"/>
</dbReference>
<dbReference type="InterPro" id="IPR000725">
    <property type="entry name" value="Olfact_rcpt"/>
</dbReference>
<dbReference type="PANTHER" id="PTHR48001">
    <property type="entry name" value="OLFACTORY RECEPTOR"/>
    <property type="match status" value="1"/>
</dbReference>
<dbReference type="Pfam" id="PF13853">
    <property type="entry name" value="7tm_4"/>
    <property type="match status" value="1"/>
</dbReference>
<dbReference type="PRINTS" id="PR00237">
    <property type="entry name" value="GPCRRHODOPSN"/>
</dbReference>
<dbReference type="PRINTS" id="PR00245">
    <property type="entry name" value="OLFACTORYR"/>
</dbReference>
<dbReference type="SUPFAM" id="SSF81321">
    <property type="entry name" value="Family A G protein-coupled receptor-like"/>
    <property type="match status" value="1"/>
</dbReference>
<dbReference type="PROSITE" id="PS00237">
    <property type="entry name" value="G_PROTEIN_RECEP_F1_1"/>
    <property type="match status" value="1"/>
</dbReference>
<dbReference type="PROSITE" id="PS50262">
    <property type="entry name" value="G_PROTEIN_RECEP_F1_2"/>
    <property type="match status" value="1"/>
</dbReference>